<accession>A1W035</accession>
<sequence>MQENLKNDKLKIGKYEFDSRFILGSGKYSLELIKSAIEEAKAQIITLALRRANTGEIANILDYIPKNITLLPNTSGARNADEALRIARLSRELGCGELIKIEVISDSRYLLPDNYETIKACELLAKEGFTPLPYMHADLYAARAMRDAGAAAIMPLAAPIGSNKGLCAKEFIQILLNEIDLPIIVDAGIGSPSQACEAMQMGVSAVMVNTAIAEAKDIALMAKAFSLAVNAGRAAFLAGLASVSKAKASSPLTGFLRD</sequence>
<proteinExistence type="inferred from homology"/>
<keyword id="KW-0963">Cytoplasm</keyword>
<keyword id="KW-0704">Schiff base</keyword>
<keyword id="KW-0784">Thiamine biosynthesis</keyword>
<keyword id="KW-0808">Transferase</keyword>
<comment type="function">
    <text evidence="1">Catalyzes the rearrangement of 1-deoxy-D-xylulose 5-phosphate (DXP) to produce the thiazole phosphate moiety of thiamine. Sulfur is provided by the thiocarboxylate moiety of the carrier protein ThiS. In vitro, sulfur can be provided by H(2)S.</text>
</comment>
<comment type="catalytic activity">
    <reaction evidence="1">
        <text>[ThiS sulfur-carrier protein]-C-terminal-Gly-aminoethanethioate + 2-iminoacetate + 1-deoxy-D-xylulose 5-phosphate = [ThiS sulfur-carrier protein]-C-terminal Gly-Gly + 2-[(2R,5Z)-2-carboxy-4-methylthiazol-5(2H)-ylidene]ethyl phosphate + 2 H2O + H(+)</text>
        <dbReference type="Rhea" id="RHEA:26297"/>
        <dbReference type="Rhea" id="RHEA-COMP:12909"/>
        <dbReference type="Rhea" id="RHEA-COMP:19908"/>
        <dbReference type="ChEBI" id="CHEBI:15377"/>
        <dbReference type="ChEBI" id="CHEBI:15378"/>
        <dbReference type="ChEBI" id="CHEBI:57792"/>
        <dbReference type="ChEBI" id="CHEBI:62899"/>
        <dbReference type="ChEBI" id="CHEBI:77846"/>
        <dbReference type="ChEBI" id="CHEBI:90778"/>
        <dbReference type="ChEBI" id="CHEBI:232372"/>
        <dbReference type="EC" id="2.8.1.10"/>
    </reaction>
</comment>
<comment type="pathway">
    <text evidence="1">Cofactor biosynthesis; thiamine diphosphate biosynthesis.</text>
</comment>
<comment type="subunit">
    <text evidence="1">Homotetramer. Forms heterodimers with either ThiH or ThiS.</text>
</comment>
<comment type="subcellular location">
    <subcellularLocation>
        <location evidence="1">Cytoplasm</location>
    </subcellularLocation>
</comment>
<comment type="similarity">
    <text evidence="1">Belongs to the ThiG family.</text>
</comment>
<feature type="chain" id="PRO_1000124610" description="Thiazole synthase">
    <location>
        <begin position="1"/>
        <end position="258"/>
    </location>
</feature>
<feature type="active site" description="Schiff-base intermediate with DXP" evidence="1">
    <location>
        <position position="100"/>
    </location>
</feature>
<feature type="binding site" evidence="1">
    <location>
        <position position="161"/>
    </location>
    <ligand>
        <name>1-deoxy-D-xylulose 5-phosphate</name>
        <dbReference type="ChEBI" id="CHEBI:57792"/>
    </ligand>
</feature>
<feature type="binding site" evidence="1">
    <location>
        <begin position="187"/>
        <end position="188"/>
    </location>
    <ligand>
        <name>1-deoxy-D-xylulose 5-phosphate</name>
        <dbReference type="ChEBI" id="CHEBI:57792"/>
    </ligand>
</feature>
<feature type="binding site" evidence="1">
    <location>
        <begin position="209"/>
        <end position="210"/>
    </location>
    <ligand>
        <name>1-deoxy-D-xylulose 5-phosphate</name>
        <dbReference type="ChEBI" id="CHEBI:57792"/>
    </ligand>
</feature>
<reference key="1">
    <citation type="submission" date="2006-12" db="EMBL/GenBank/DDBJ databases">
        <authorList>
            <person name="Fouts D.E."/>
            <person name="Nelson K.E."/>
            <person name="Sebastian Y."/>
        </authorList>
    </citation>
    <scope>NUCLEOTIDE SEQUENCE [LARGE SCALE GENOMIC DNA]</scope>
    <source>
        <strain>81-176</strain>
    </source>
</reference>
<name>THIG_CAMJJ</name>
<protein>
    <recommendedName>
        <fullName evidence="1">Thiazole synthase</fullName>
        <ecNumber evidence="1">2.8.1.10</ecNumber>
    </recommendedName>
</protein>
<organism>
    <name type="scientific">Campylobacter jejuni subsp. jejuni serotype O:23/36 (strain 81-176)</name>
    <dbReference type="NCBI Taxonomy" id="354242"/>
    <lineage>
        <taxon>Bacteria</taxon>
        <taxon>Pseudomonadati</taxon>
        <taxon>Campylobacterota</taxon>
        <taxon>Epsilonproteobacteria</taxon>
        <taxon>Campylobacterales</taxon>
        <taxon>Campylobacteraceae</taxon>
        <taxon>Campylobacter</taxon>
    </lineage>
</organism>
<gene>
    <name evidence="1" type="primary">thiG</name>
    <name type="ordered locus">CJJ81176_1066</name>
</gene>
<evidence type="ECO:0000255" key="1">
    <source>
        <dbReference type="HAMAP-Rule" id="MF_00443"/>
    </source>
</evidence>
<dbReference type="EC" id="2.8.1.10" evidence="1"/>
<dbReference type="EMBL" id="CP000538">
    <property type="protein sequence ID" value="EAQ72173.1"/>
    <property type="molecule type" value="Genomic_DNA"/>
</dbReference>
<dbReference type="RefSeq" id="WP_002856549.1">
    <property type="nucleotide sequence ID" value="NC_008787.1"/>
</dbReference>
<dbReference type="SMR" id="A1W035"/>
<dbReference type="KEGG" id="cjj:CJJ81176_1066"/>
<dbReference type="eggNOG" id="COG2022">
    <property type="taxonomic scope" value="Bacteria"/>
</dbReference>
<dbReference type="HOGENOM" id="CLU_062233_1_0_7"/>
<dbReference type="UniPathway" id="UPA00060"/>
<dbReference type="Proteomes" id="UP000000646">
    <property type="component" value="Chromosome"/>
</dbReference>
<dbReference type="GO" id="GO:0005737">
    <property type="term" value="C:cytoplasm"/>
    <property type="evidence" value="ECO:0007669"/>
    <property type="project" value="UniProtKB-SubCell"/>
</dbReference>
<dbReference type="GO" id="GO:1990107">
    <property type="term" value="F:thiazole synthase activity"/>
    <property type="evidence" value="ECO:0007669"/>
    <property type="project" value="UniProtKB-EC"/>
</dbReference>
<dbReference type="GO" id="GO:0009229">
    <property type="term" value="P:thiamine diphosphate biosynthetic process"/>
    <property type="evidence" value="ECO:0007669"/>
    <property type="project" value="UniProtKB-UniRule"/>
</dbReference>
<dbReference type="CDD" id="cd04728">
    <property type="entry name" value="ThiG"/>
    <property type="match status" value="1"/>
</dbReference>
<dbReference type="Gene3D" id="3.20.20.70">
    <property type="entry name" value="Aldolase class I"/>
    <property type="match status" value="1"/>
</dbReference>
<dbReference type="HAMAP" id="MF_00443">
    <property type="entry name" value="ThiG"/>
    <property type="match status" value="1"/>
</dbReference>
<dbReference type="InterPro" id="IPR013785">
    <property type="entry name" value="Aldolase_TIM"/>
</dbReference>
<dbReference type="InterPro" id="IPR033983">
    <property type="entry name" value="Thiazole_synthase_ThiG"/>
</dbReference>
<dbReference type="InterPro" id="IPR008867">
    <property type="entry name" value="ThiG"/>
</dbReference>
<dbReference type="PANTHER" id="PTHR34266">
    <property type="entry name" value="THIAZOLE SYNTHASE"/>
    <property type="match status" value="1"/>
</dbReference>
<dbReference type="PANTHER" id="PTHR34266:SF2">
    <property type="entry name" value="THIAZOLE SYNTHASE"/>
    <property type="match status" value="1"/>
</dbReference>
<dbReference type="Pfam" id="PF05690">
    <property type="entry name" value="ThiG"/>
    <property type="match status" value="1"/>
</dbReference>
<dbReference type="SUPFAM" id="SSF110399">
    <property type="entry name" value="ThiG-like"/>
    <property type="match status" value="1"/>
</dbReference>